<evidence type="ECO:0000255" key="1">
    <source>
        <dbReference type="PROSITE-ProRule" id="PRU00409"/>
    </source>
</evidence>
<evidence type="ECO:0000305" key="2"/>
<evidence type="ECO:0000305" key="3">
    <source>
    </source>
</evidence>
<sequence length="570" mass="62712">MDSRTVGILGGGQLGRMIVEAANRLNIKTLILDAPNSPAKQITNASDHVDGSFANKEDIEALAAKCDVMTVEIEHVDVNALKEVQKQFPKLEIYPTPETIGLIQDKYVQKQHLVKNRIPVVPSITVENSKESLIKTGSSLGYPFVLKSRTLAYDGRGNFVVKSEEDIEKGLEFLANRPLYAEKWASFKKELSVMIIRSLDGRVYSYPIVETIHKNNVCHLCYVPARVPDSVQHKAKLMAENAIKSFPGCGIFGVEMFLLDDDSIVLNEIAPRPHNSGHYTINACVVSQFEAHLRAILDLPMPKNFTSLSTNSTNAIMLNLLGDPETKDKELQICERALNTPGASVYLYGKESKPNRKVGHINIVCSSMKECDKRLQFIMGLKTDPIKHSVMEILNAEEVRKPLVGVIMGSDSDLPVMSAACKMLEQFEVPFEVTIVSAHRTPYRMNKYASEAVSRGIKVIIAGAGGAAHLPGMVAAMTPVPVIGVPVKGSTLDGVDSLHSIVQMPRGVPVATVAINNSTNAGILAVRMLGIHNYDYVKKMEEFLNKQEEEVLQKAAKLESIGYEKYLESK</sequence>
<accession>O74197</accession>
<accession>Q6FM75</accession>
<keyword id="KW-0067">ATP-binding</keyword>
<keyword id="KW-0210">Decarboxylase</keyword>
<keyword id="KW-0456">Lyase</keyword>
<keyword id="KW-0547">Nucleotide-binding</keyword>
<keyword id="KW-0658">Purine biosynthesis</keyword>
<keyword id="KW-1185">Reference proteome</keyword>
<dbReference type="EC" id="4.1.1.21" evidence="3"/>
<dbReference type="EMBL" id="AF030388">
    <property type="protein sequence ID" value="AAC27548.1"/>
    <property type="molecule type" value="Genomic_DNA"/>
</dbReference>
<dbReference type="EMBL" id="CR380957">
    <property type="protein sequence ID" value="CAG61632.1"/>
    <property type="molecule type" value="Genomic_DNA"/>
</dbReference>
<dbReference type="RefSeq" id="XP_448669.1">
    <property type="nucleotide sequence ID" value="XM_448669.1"/>
</dbReference>
<dbReference type="SMR" id="O74197"/>
<dbReference type="FunCoup" id="O74197">
    <property type="interactions" value="199"/>
</dbReference>
<dbReference type="STRING" id="284593.O74197"/>
<dbReference type="EnsemblFungi" id="CAGL0K10340g-T">
    <property type="protein sequence ID" value="CAGL0K10340g-T-p1"/>
    <property type="gene ID" value="CAGL0K10340g"/>
</dbReference>
<dbReference type="GeneID" id="2890129"/>
<dbReference type="KEGG" id="cgr:2890129"/>
<dbReference type="CGD" id="CAL0134467">
    <property type="gene designation" value="ADE2"/>
</dbReference>
<dbReference type="VEuPathDB" id="FungiDB:B1J91_K10340g"/>
<dbReference type="VEuPathDB" id="FungiDB:CAGL0K10340g"/>
<dbReference type="eggNOG" id="KOG2835">
    <property type="taxonomic scope" value="Eukaryota"/>
</dbReference>
<dbReference type="HOGENOM" id="CLU_011534_2_1_1"/>
<dbReference type="InParanoid" id="O74197"/>
<dbReference type="OMA" id="ITFDHEH"/>
<dbReference type="UniPathway" id="UPA00074">
    <property type="reaction ID" value="UER00130"/>
</dbReference>
<dbReference type="Proteomes" id="UP000002428">
    <property type="component" value="Chromosome K"/>
</dbReference>
<dbReference type="GO" id="GO:0005524">
    <property type="term" value="F:ATP binding"/>
    <property type="evidence" value="ECO:0007669"/>
    <property type="project" value="UniProtKB-KW"/>
</dbReference>
<dbReference type="GO" id="GO:0046872">
    <property type="term" value="F:metal ion binding"/>
    <property type="evidence" value="ECO:0007669"/>
    <property type="project" value="InterPro"/>
</dbReference>
<dbReference type="GO" id="GO:0004638">
    <property type="term" value="F:phosphoribosylaminoimidazole carboxylase activity"/>
    <property type="evidence" value="ECO:0000316"/>
    <property type="project" value="CGD"/>
</dbReference>
<dbReference type="GO" id="GO:0006189">
    <property type="term" value="P:'de novo' IMP biosynthetic process"/>
    <property type="evidence" value="ECO:0007669"/>
    <property type="project" value="UniProtKB-UniPathway"/>
</dbReference>
<dbReference type="GO" id="GO:0006144">
    <property type="term" value="P:purine nucleobase metabolic process"/>
    <property type="evidence" value="ECO:0000316"/>
    <property type="project" value="CGD"/>
</dbReference>
<dbReference type="FunFam" id="3.40.50.1970:FF:000013">
    <property type="entry name" value="Phosphoribosylaminoimidazole carboxylase"/>
    <property type="match status" value="1"/>
</dbReference>
<dbReference type="FunFam" id="3.40.50.20:FF:000030">
    <property type="entry name" value="Phosphoribosylaminoimidazole carboxylase"/>
    <property type="match status" value="1"/>
</dbReference>
<dbReference type="FunFam" id="3.30.470.20:FF:000037">
    <property type="entry name" value="Phosphoribosylaminoimidazole carboxylase, chloroplastic"/>
    <property type="match status" value="1"/>
</dbReference>
<dbReference type="Gene3D" id="3.40.50.1970">
    <property type="match status" value="1"/>
</dbReference>
<dbReference type="Gene3D" id="3.40.50.20">
    <property type="match status" value="1"/>
</dbReference>
<dbReference type="Gene3D" id="3.30.1490.20">
    <property type="entry name" value="ATP-grasp fold, A domain"/>
    <property type="match status" value="1"/>
</dbReference>
<dbReference type="Gene3D" id="3.30.470.20">
    <property type="entry name" value="ATP-grasp fold, B domain"/>
    <property type="match status" value="1"/>
</dbReference>
<dbReference type="HAMAP" id="MF_01929">
    <property type="entry name" value="PurE_classI"/>
    <property type="match status" value="1"/>
</dbReference>
<dbReference type="HAMAP" id="MF_01928">
    <property type="entry name" value="PurK"/>
    <property type="match status" value="1"/>
</dbReference>
<dbReference type="InterPro" id="IPR016301">
    <property type="entry name" value="Ade2_fungi/plant"/>
</dbReference>
<dbReference type="InterPro" id="IPR011761">
    <property type="entry name" value="ATP-grasp"/>
</dbReference>
<dbReference type="InterPro" id="IPR003135">
    <property type="entry name" value="ATP-grasp_carboxylate-amine"/>
</dbReference>
<dbReference type="InterPro" id="IPR013815">
    <property type="entry name" value="ATP_grasp_subdomain_1"/>
</dbReference>
<dbReference type="InterPro" id="IPR016185">
    <property type="entry name" value="PreATP-grasp_dom_sf"/>
</dbReference>
<dbReference type="InterPro" id="IPR033747">
    <property type="entry name" value="PurE_ClassI"/>
</dbReference>
<dbReference type="InterPro" id="IPR000031">
    <property type="entry name" value="PurE_dom"/>
</dbReference>
<dbReference type="InterPro" id="IPR005875">
    <property type="entry name" value="PurK"/>
</dbReference>
<dbReference type="InterPro" id="IPR040686">
    <property type="entry name" value="PurK_C"/>
</dbReference>
<dbReference type="InterPro" id="IPR054350">
    <property type="entry name" value="PurT/PurK_preATP-grasp"/>
</dbReference>
<dbReference type="InterPro" id="IPR011054">
    <property type="entry name" value="Rudment_hybrid_motif"/>
</dbReference>
<dbReference type="NCBIfam" id="NF004679">
    <property type="entry name" value="PRK06019.1-5"/>
    <property type="match status" value="1"/>
</dbReference>
<dbReference type="NCBIfam" id="TIGR01162">
    <property type="entry name" value="purE"/>
    <property type="match status" value="1"/>
</dbReference>
<dbReference type="NCBIfam" id="TIGR01161">
    <property type="entry name" value="purK"/>
    <property type="match status" value="1"/>
</dbReference>
<dbReference type="PANTHER" id="PTHR11609:SF5">
    <property type="entry name" value="PHOSPHORIBOSYLAMINOIMIDAZOLE CARBOXYLASE"/>
    <property type="match status" value="1"/>
</dbReference>
<dbReference type="PANTHER" id="PTHR11609">
    <property type="entry name" value="PURINE BIOSYNTHESIS PROTEIN 6/7, PUR6/7"/>
    <property type="match status" value="1"/>
</dbReference>
<dbReference type="Pfam" id="PF00731">
    <property type="entry name" value="AIRC"/>
    <property type="match status" value="1"/>
</dbReference>
<dbReference type="Pfam" id="PF02222">
    <property type="entry name" value="ATP-grasp"/>
    <property type="match status" value="1"/>
</dbReference>
<dbReference type="Pfam" id="PF17769">
    <property type="entry name" value="PurK_C"/>
    <property type="match status" value="1"/>
</dbReference>
<dbReference type="Pfam" id="PF22660">
    <property type="entry name" value="RS_preATP-grasp-like"/>
    <property type="match status" value="1"/>
</dbReference>
<dbReference type="PIRSF" id="PIRSF001340">
    <property type="entry name" value="AIR_carboxylase"/>
    <property type="match status" value="1"/>
</dbReference>
<dbReference type="SMART" id="SM01001">
    <property type="entry name" value="AIRC"/>
    <property type="match status" value="1"/>
</dbReference>
<dbReference type="SUPFAM" id="SSF56059">
    <property type="entry name" value="Glutathione synthetase ATP-binding domain-like"/>
    <property type="match status" value="1"/>
</dbReference>
<dbReference type="SUPFAM" id="SSF52255">
    <property type="entry name" value="N5-CAIR mutase (phosphoribosylaminoimidazole carboxylase, PurE)"/>
    <property type="match status" value="1"/>
</dbReference>
<dbReference type="SUPFAM" id="SSF52440">
    <property type="entry name" value="PreATP-grasp domain"/>
    <property type="match status" value="1"/>
</dbReference>
<dbReference type="SUPFAM" id="SSF51246">
    <property type="entry name" value="Rudiment single hybrid motif"/>
    <property type="match status" value="1"/>
</dbReference>
<dbReference type="PROSITE" id="PS50975">
    <property type="entry name" value="ATP_GRASP"/>
    <property type="match status" value="1"/>
</dbReference>
<reference key="1">
    <citation type="journal article" date="1998" name="Gene">
        <title>A high-copy-number ADE2-bearing plasmid for transformation of Candida glabrata.</title>
        <authorList>
            <person name="Hanic-Joyce P.J."/>
            <person name="Joyce P.B.M."/>
        </authorList>
    </citation>
    <scope>NUCLEOTIDE SEQUENCE [GENOMIC DNA]</scope>
    <scope>CATALYTIC ACTIVITY</scope>
    <source>
        <strain>ATCC 2001 / BCRC 20586 / JCM 3761 / NBRC 0622 / NRRL Y-65 / CBS 138</strain>
    </source>
</reference>
<reference key="2">
    <citation type="journal article" date="2004" name="Nature">
        <title>Genome evolution in yeasts.</title>
        <authorList>
            <person name="Dujon B."/>
            <person name="Sherman D."/>
            <person name="Fischer G."/>
            <person name="Durrens P."/>
            <person name="Casaregola S."/>
            <person name="Lafontaine I."/>
            <person name="de Montigny J."/>
            <person name="Marck C."/>
            <person name="Neuveglise C."/>
            <person name="Talla E."/>
            <person name="Goffard N."/>
            <person name="Frangeul L."/>
            <person name="Aigle M."/>
            <person name="Anthouard V."/>
            <person name="Babour A."/>
            <person name="Barbe V."/>
            <person name="Barnay S."/>
            <person name="Blanchin S."/>
            <person name="Beckerich J.-M."/>
            <person name="Beyne E."/>
            <person name="Bleykasten C."/>
            <person name="Boisrame A."/>
            <person name="Boyer J."/>
            <person name="Cattolico L."/>
            <person name="Confanioleri F."/>
            <person name="de Daruvar A."/>
            <person name="Despons L."/>
            <person name="Fabre E."/>
            <person name="Fairhead C."/>
            <person name="Ferry-Dumazet H."/>
            <person name="Groppi A."/>
            <person name="Hantraye F."/>
            <person name="Hennequin C."/>
            <person name="Jauniaux N."/>
            <person name="Joyet P."/>
            <person name="Kachouri R."/>
            <person name="Kerrest A."/>
            <person name="Koszul R."/>
            <person name="Lemaire M."/>
            <person name="Lesur I."/>
            <person name="Ma L."/>
            <person name="Muller H."/>
            <person name="Nicaud J.-M."/>
            <person name="Nikolski M."/>
            <person name="Oztas S."/>
            <person name="Ozier-Kalogeropoulos O."/>
            <person name="Pellenz S."/>
            <person name="Potier S."/>
            <person name="Richard G.-F."/>
            <person name="Straub M.-L."/>
            <person name="Suleau A."/>
            <person name="Swennen D."/>
            <person name="Tekaia F."/>
            <person name="Wesolowski-Louvel M."/>
            <person name="Westhof E."/>
            <person name="Wirth B."/>
            <person name="Zeniou-Meyer M."/>
            <person name="Zivanovic Y."/>
            <person name="Bolotin-Fukuhara M."/>
            <person name="Thierry A."/>
            <person name="Bouchier C."/>
            <person name="Caudron B."/>
            <person name="Scarpelli C."/>
            <person name="Gaillardin C."/>
            <person name="Weissenbach J."/>
            <person name="Wincker P."/>
            <person name="Souciet J.-L."/>
        </authorList>
    </citation>
    <scope>NUCLEOTIDE SEQUENCE [LARGE SCALE GENOMIC DNA]</scope>
    <source>
        <strain>ATCC 2001 / BCRC 20586 / JCM 3761 / NBRC 0622 / NRRL Y-65 / CBS 138</strain>
    </source>
</reference>
<feature type="chain" id="PRO_0000075022" description="Phosphoribosylaminoimidazole carboxylase">
    <location>
        <begin position="1"/>
        <end position="570"/>
    </location>
</feature>
<feature type="domain" description="ATP-grasp" evidence="1">
    <location>
        <begin position="110"/>
        <end position="297"/>
    </location>
</feature>
<feature type="binding site" evidence="1">
    <location>
        <begin position="137"/>
        <end position="192"/>
    </location>
    <ligand>
        <name>ATP</name>
        <dbReference type="ChEBI" id="CHEBI:30616"/>
    </ligand>
</feature>
<feature type="sequence conflict" description="In Ref. 1; AAC27548." evidence="2" ref="1">
    <original>MT</original>
    <variation>IA</variation>
    <location>
        <begin position="477"/>
        <end position="478"/>
    </location>
</feature>
<feature type="sequence conflict" description="In Ref. 1; AAC27548." evidence="2" ref="1">
    <original>T</original>
    <variation>F</variation>
    <location>
        <position position="491"/>
    </location>
</feature>
<gene>
    <name type="primary">ADE2</name>
    <name type="ordered locus">CAGL0K10340g</name>
</gene>
<protein>
    <recommendedName>
        <fullName>Phosphoribosylaminoimidazole carboxylase</fullName>
        <ecNumber evidence="3">4.1.1.21</ecNumber>
    </recommendedName>
    <alternativeName>
        <fullName>AIR carboxylase</fullName>
        <shortName>AIRC</shortName>
    </alternativeName>
</protein>
<name>PUR6_CANGA</name>
<proteinExistence type="evidence at protein level"/>
<organism>
    <name type="scientific">Candida glabrata (strain ATCC 2001 / BCRC 20586 / JCM 3761 / NBRC 0622 / NRRL Y-65 / CBS 138)</name>
    <name type="common">Yeast</name>
    <name type="synonym">Nakaseomyces glabratus</name>
    <dbReference type="NCBI Taxonomy" id="284593"/>
    <lineage>
        <taxon>Eukaryota</taxon>
        <taxon>Fungi</taxon>
        <taxon>Dikarya</taxon>
        <taxon>Ascomycota</taxon>
        <taxon>Saccharomycotina</taxon>
        <taxon>Saccharomycetes</taxon>
        <taxon>Saccharomycetales</taxon>
        <taxon>Saccharomycetaceae</taxon>
        <taxon>Nakaseomyces</taxon>
    </lineage>
</organism>
<comment type="catalytic activity">
    <reaction evidence="3">
        <text>5-amino-1-(5-phospho-D-ribosyl)imidazole-4-carboxylate + H(+) = 5-amino-1-(5-phospho-beta-D-ribosyl)imidazole + CO2</text>
        <dbReference type="Rhea" id="RHEA:10792"/>
        <dbReference type="ChEBI" id="CHEBI:15378"/>
        <dbReference type="ChEBI" id="CHEBI:16526"/>
        <dbReference type="ChEBI" id="CHEBI:77657"/>
        <dbReference type="ChEBI" id="CHEBI:137981"/>
        <dbReference type="EC" id="4.1.1.21"/>
    </reaction>
</comment>
<comment type="pathway">
    <text>Purine metabolism; IMP biosynthesis via de novo pathway; 5-amino-1-(5-phospho-D-ribosyl)imidazole-4-carboxylate from 5-amino-1-(5-phospho-D-ribosyl)imidazole (carboxylase route): step 1/1.</text>
</comment>
<comment type="similarity">
    <text evidence="2">In the C-terminal section; belongs to the AIR carboxylase family. Class I subfamily.</text>
</comment>